<reference key="1">
    <citation type="journal article" date="2000" name="Science">
        <title>The genome sequence of Drosophila melanogaster.</title>
        <authorList>
            <person name="Adams M.D."/>
            <person name="Celniker S.E."/>
            <person name="Holt R.A."/>
            <person name="Evans C.A."/>
            <person name="Gocayne J.D."/>
            <person name="Amanatides P.G."/>
            <person name="Scherer S.E."/>
            <person name="Li P.W."/>
            <person name="Hoskins R.A."/>
            <person name="Galle R.F."/>
            <person name="George R.A."/>
            <person name="Lewis S.E."/>
            <person name="Richards S."/>
            <person name="Ashburner M."/>
            <person name="Henderson S.N."/>
            <person name="Sutton G.G."/>
            <person name="Wortman J.R."/>
            <person name="Yandell M.D."/>
            <person name="Zhang Q."/>
            <person name="Chen L.X."/>
            <person name="Brandon R.C."/>
            <person name="Rogers Y.-H.C."/>
            <person name="Blazej R.G."/>
            <person name="Champe M."/>
            <person name="Pfeiffer B.D."/>
            <person name="Wan K.H."/>
            <person name="Doyle C."/>
            <person name="Baxter E.G."/>
            <person name="Helt G."/>
            <person name="Nelson C.R."/>
            <person name="Miklos G.L.G."/>
            <person name="Abril J.F."/>
            <person name="Agbayani A."/>
            <person name="An H.-J."/>
            <person name="Andrews-Pfannkoch C."/>
            <person name="Baldwin D."/>
            <person name="Ballew R.M."/>
            <person name="Basu A."/>
            <person name="Baxendale J."/>
            <person name="Bayraktaroglu L."/>
            <person name="Beasley E.M."/>
            <person name="Beeson K.Y."/>
            <person name="Benos P.V."/>
            <person name="Berman B.P."/>
            <person name="Bhandari D."/>
            <person name="Bolshakov S."/>
            <person name="Borkova D."/>
            <person name="Botchan M.R."/>
            <person name="Bouck J."/>
            <person name="Brokstein P."/>
            <person name="Brottier P."/>
            <person name="Burtis K.C."/>
            <person name="Busam D.A."/>
            <person name="Butler H."/>
            <person name="Cadieu E."/>
            <person name="Center A."/>
            <person name="Chandra I."/>
            <person name="Cherry J.M."/>
            <person name="Cawley S."/>
            <person name="Dahlke C."/>
            <person name="Davenport L.B."/>
            <person name="Davies P."/>
            <person name="de Pablos B."/>
            <person name="Delcher A."/>
            <person name="Deng Z."/>
            <person name="Mays A.D."/>
            <person name="Dew I."/>
            <person name="Dietz S.M."/>
            <person name="Dodson K."/>
            <person name="Doup L.E."/>
            <person name="Downes M."/>
            <person name="Dugan-Rocha S."/>
            <person name="Dunkov B.C."/>
            <person name="Dunn P."/>
            <person name="Durbin K.J."/>
            <person name="Evangelista C.C."/>
            <person name="Ferraz C."/>
            <person name="Ferriera S."/>
            <person name="Fleischmann W."/>
            <person name="Fosler C."/>
            <person name="Gabrielian A.E."/>
            <person name="Garg N.S."/>
            <person name="Gelbart W.M."/>
            <person name="Glasser K."/>
            <person name="Glodek A."/>
            <person name="Gong F."/>
            <person name="Gorrell J.H."/>
            <person name="Gu Z."/>
            <person name="Guan P."/>
            <person name="Harris M."/>
            <person name="Harris N.L."/>
            <person name="Harvey D.A."/>
            <person name="Heiman T.J."/>
            <person name="Hernandez J.R."/>
            <person name="Houck J."/>
            <person name="Hostin D."/>
            <person name="Houston K.A."/>
            <person name="Howland T.J."/>
            <person name="Wei M.-H."/>
            <person name="Ibegwam C."/>
            <person name="Jalali M."/>
            <person name="Kalush F."/>
            <person name="Karpen G.H."/>
            <person name="Ke Z."/>
            <person name="Kennison J.A."/>
            <person name="Ketchum K.A."/>
            <person name="Kimmel B.E."/>
            <person name="Kodira C.D."/>
            <person name="Kraft C.L."/>
            <person name="Kravitz S."/>
            <person name="Kulp D."/>
            <person name="Lai Z."/>
            <person name="Lasko P."/>
            <person name="Lei Y."/>
            <person name="Levitsky A.A."/>
            <person name="Li J.H."/>
            <person name="Li Z."/>
            <person name="Liang Y."/>
            <person name="Lin X."/>
            <person name="Liu X."/>
            <person name="Mattei B."/>
            <person name="McIntosh T.C."/>
            <person name="McLeod M.P."/>
            <person name="McPherson D."/>
            <person name="Merkulov G."/>
            <person name="Milshina N.V."/>
            <person name="Mobarry C."/>
            <person name="Morris J."/>
            <person name="Moshrefi A."/>
            <person name="Mount S.M."/>
            <person name="Moy M."/>
            <person name="Murphy B."/>
            <person name="Murphy L."/>
            <person name="Muzny D.M."/>
            <person name="Nelson D.L."/>
            <person name="Nelson D.R."/>
            <person name="Nelson K.A."/>
            <person name="Nixon K."/>
            <person name="Nusskern D.R."/>
            <person name="Pacleb J.M."/>
            <person name="Palazzolo M."/>
            <person name="Pittman G.S."/>
            <person name="Pan S."/>
            <person name="Pollard J."/>
            <person name="Puri V."/>
            <person name="Reese M.G."/>
            <person name="Reinert K."/>
            <person name="Remington K."/>
            <person name="Saunders R.D.C."/>
            <person name="Scheeler F."/>
            <person name="Shen H."/>
            <person name="Shue B.C."/>
            <person name="Siden-Kiamos I."/>
            <person name="Simpson M."/>
            <person name="Skupski M.P."/>
            <person name="Smith T.J."/>
            <person name="Spier E."/>
            <person name="Spradling A.C."/>
            <person name="Stapleton M."/>
            <person name="Strong R."/>
            <person name="Sun E."/>
            <person name="Svirskas R."/>
            <person name="Tector C."/>
            <person name="Turner R."/>
            <person name="Venter E."/>
            <person name="Wang A.H."/>
            <person name="Wang X."/>
            <person name="Wang Z.-Y."/>
            <person name="Wassarman D.A."/>
            <person name="Weinstock G.M."/>
            <person name="Weissenbach J."/>
            <person name="Williams S.M."/>
            <person name="Woodage T."/>
            <person name="Worley K.C."/>
            <person name="Wu D."/>
            <person name="Yang S."/>
            <person name="Yao Q.A."/>
            <person name="Ye J."/>
            <person name="Yeh R.-F."/>
            <person name="Zaveri J.S."/>
            <person name="Zhan M."/>
            <person name="Zhang G."/>
            <person name="Zhao Q."/>
            <person name="Zheng L."/>
            <person name="Zheng X.H."/>
            <person name="Zhong F.N."/>
            <person name="Zhong W."/>
            <person name="Zhou X."/>
            <person name="Zhu S.C."/>
            <person name="Zhu X."/>
            <person name="Smith H.O."/>
            <person name="Gibbs R.A."/>
            <person name="Myers E.W."/>
            <person name="Rubin G.M."/>
            <person name="Venter J.C."/>
        </authorList>
    </citation>
    <scope>NUCLEOTIDE SEQUENCE [LARGE SCALE GENOMIC DNA]</scope>
    <source>
        <strain>Berkeley</strain>
    </source>
</reference>
<reference key="2">
    <citation type="journal article" date="2002" name="Genome Biol.">
        <title>Annotation of the Drosophila melanogaster euchromatic genome: a systematic review.</title>
        <authorList>
            <person name="Misra S."/>
            <person name="Crosby M.A."/>
            <person name="Mungall C.J."/>
            <person name="Matthews B.B."/>
            <person name="Campbell K.S."/>
            <person name="Hradecky P."/>
            <person name="Huang Y."/>
            <person name="Kaminker J.S."/>
            <person name="Millburn G.H."/>
            <person name="Prochnik S.E."/>
            <person name="Smith C.D."/>
            <person name="Tupy J.L."/>
            <person name="Whitfield E.J."/>
            <person name="Bayraktaroglu L."/>
            <person name="Berman B.P."/>
            <person name="Bettencourt B.R."/>
            <person name="Celniker S.E."/>
            <person name="de Grey A.D.N.J."/>
            <person name="Drysdale R.A."/>
            <person name="Harris N.L."/>
            <person name="Richter J."/>
            <person name="Russo S."/>
            <person name="Schroeder A.J."/>
            <person name="Shu S.Q."/>
            <person name="Stapleton M."/>
            <person name="Yamada C."/>
            <person name="Ashburner M."/>
            <person name="Gelbart W.M."/>
            <person name="Rubin G.M."/>
            <person name="Lewis S.E."/>
        </authorList>
    </citation>
    <scope>GENOME REANNOTATION</scope>
    <source>
        <strain>Berkeley</strain>
    </source>
</reference>
<reference key="3">
    <citation type="journal article" date="2002" name="Genome Biol.">
        <title>A Drosophila full-length cDNA resource.</title>
        <authorList>
            <person name="Stapleton M."/>
            <person name="Carlson J.W."/>
            <person name="Brokstein P."/>
            <person name="Yu C."/>
            <person name="Champe M."/>
            <person name="George R.A."/>
            <person name="Guarin H."/>
            <person name="Kronmiller B."/>
            <person name="Pacleb J.M."/>
            <person name="Park S."/>
            <person name="Wan K.H."/>
            <person name="Rubin G.M."/>
            <person name="Celniker S.E."/>
        </authorList>
    </citation>
    <scope>NUCLEOTIDE SEQUENCE [LARGE SCALE MRNA]</scope>
    <source>
        <strain>Berkeley</strain>
        <tissue>Embryo</tissue>
    </source>
</reference>
<reference key="4">
    <citation type="journal article" date="2003" name="J. Biol. Chem.">
        <title>Functional characterization and expression analysis of members of the UDP-GalNAc:polypeptide N-acetylgalactosaminyltransferase family from Drosophila melanogaster.</title>
        <authorList>
            <person name="Ten Hagen K.G."/>
            <person name="Tran D.T."/>
            <person name="Gerken T.A."/>
            <person name="Stein D.S."/>
            <person name="Zhang Z."/>
        </authorList>
    </citation>
    <scope>FUNCTION</scope>
    <scope>CATALYTIC ACTIVITY</scope>
    <scope>PATHWAY</scope>
    <scope>TISSUE SPECIFICITY</scope>
    <scope>DEVELOPMENTAL STAGE</scope>
</reference>
<reference key="5">
    <citation type="journal article" date="2006" name="Glycobiology">
        <title>Expression of the UDP-GalNAc: polypeptide N-acetylgalactosaminyltransferase family is spatially and temporally regulated during Drosophila development.</title>
        <authorList>
            <person name="Tian E."/>
            <person name="Ten Hagen K.G."/>
        </authorList>
    </citation>
    <scope>TISSUE SPECIFICITY</scope>
    <scope>DEVELOPMENTAL STAGE</scope>
</reference>
<comment type="function">
    <text evidence="4">Catalyzes the initial reaction in O-linked oligosaccharide biosynthesis, the transfer of an N-acetyl-D-galactosamine residue to a serine or threonine residue on the protein receptor. It can both act as a peptide transferase that transfers GalNAc onto unmodified peptide substrates, and as a glycopeptide transferase that requires the prior addition of a GalNAc on a peptide before adding additional GalNAc moieties. Prefers both EA2 and the diglycosylated Muc5AC-3/13 as substrates, albeit at very low levels fro Muc5AC-3/13.</text>
</comment>
<comment type="catalytic activity">
    <reaction evidence="4">
        <text>L-seryl-[protein] + UDP-N-acetyl-alpha-D-galactosamine = a 3-O-[N-acetyl-alpha-D-galactosaminyl]-L-seryl-[protein] + UDP + H(+)</text>
        <dbReference type="Rhea" id="RHEA:23956"/>
        <dbReference type="Rhea" id="RHEA-COMP:9863"/>
        <dbReference type="Rhea" id="RHEA-COMP:12788"/>
        <dbReference type="ChEBI" id="CHEBI:15378"/>
        <dbReference type="ChEBI" id="CHEBI:29999"/>
        <dbReference type="ChEBI" id="CHEBI:53604"/>
        <dbReference type="ChEBI" id="CHEBI:58223"/>
        <dbReference type="ChEBI" id="CHEBI:67138"/>
        <dbReference type="EC" id="2.4.1.41"/>
    </reaction>
</comment>
<comment type="catalytic activity">
    <reaction evidence="4">
        <text>L-threonyl-[protein] + UDP-N-acetyl-alpha-D-galactosamine = a 3-O-[N-acetyl-alpha-D-galactosaminyl]-L-threonyl-[protein] + UDP + H(+)</text>
        <dbReference type="Rhea" id="RHEA:52424"/>
        <dbReference type="Rhea" id="RHEA-COMP:11060"/>
        <dbReference type="Rhea" id="RHEA-COMP:11689"/>
        <dbReference type="ChEBI" id="CHEBI:15378"/>
        <dbReference type="ChEBI" id="CHEBI:30013"/>
        <dbReference type="ChEBI" id="CHEBI:58223"/>
        <dbReference type="ChEBI" id="CHEBI:67138"/>
        <dbReference type="ChEBI" id="CHEBI:87075"/>
        <dbReference type="EC" id="2.4.1.41"/>
    </reaction>
</comment>
<comment type="cofactor">
    <cofactor evidence="1">
        <name>Mn(2+)</name>
        <dbReference type="ChEBI" id="CHEBI:29035"/>
    </cofactor>
</comment>
<comment type="pathway">
    <text evidence="7">Protein modification; protein glycosylation.</text>
</comment>
<comment type="subcellular location">
    <subcellularLocation>
        <location evidence="1">Golgi apparatus membrane</location>
        <topology evidence="1">Single-pass type II membrane protein</topology>
    </subcellularLocation>
</comment>
<comment type="tissue specificity">
    <text evidence="4 5">Expressed in developing oocytes and egg chambers. During embryonic stages 9-11, expressed in the primordium of the foregut, midgut and hindgut. During embryonic stages 12-13, expressed in the posterior midgut and hindgut. During embryonic stages 14-15, expression continues in the hindgut. No expression detected during embryonic stages 16-17 or in third instar larvae imaginal disks.</text>
</comment>
<comment type="developmental stage">
    <text evidence="4 5">Expressed both maternally and zygotically. Weakly expressed during early embryonic stages but increases during 12-24 hours of embryogenesis through larval development and continues to be expressed throughout adulthood, albeit at slightly lower levels in males than females.</text>
</comment>
<comment type="domain">
    <text evidence="1">There are two conserved domains in the glycosyltransferase region: the N-terminal domain (domain A, also called GT1 motif), which is probably involved in manganese coordination and substrate binding and the C-terminal domain (domain B, also called Gal/GalNAc-T motif), which is probably involved in catalytic reaction and UDP-Gal binding.</text>
</comment>
<comment type="domain">
    <text evidence="1">The ricin B-type lectin domain binds to GalNAc and contributes to the glycopeptide specificity.</text>
</comment>
<comment type="similarity">
    <text evidence="6">Belongs to the glycosyltransferase 2 family. GalNAc-T subfamily.</text>
</comment>
<organism>
    <name type="scientific">Drosophila melanogaster</name>
    <name type="common">Fruit fly</name>
    <dbReference type="NCBI Taxonomy" id="7227"/>
    <lineage>
        <taxon>Eukaryota</taxon>
        <taxon>Metazoa</taxon>
        <taxon>Ecdysozoa</taxon>
        <taxon>Arthropoda</taxon>
        <taxon>Hexapoda</taxon>
        <taxon>Insecta</taxon>
        <taxon>Pterygota</taxon>
        <taxon>Neoptera</taxon>
        <taxon>Endopterygota</taxon>
        <taxon>Diptera</taxon>
        <taxon>Brachycera</taxon>
        <taxon>Muscomorpha</taxon>
        <taxon>Ephydroidea</taxon>
        <taxon>Drosophilidae</taxon>
        <taxon>Drosophila</taxon>
        <taxon>Sophophora</taxon>
    </lineage>
</organism>
<proteinExistence type="evidence at protein level"/>
<accession>Q9VUT6</accession>
<feature type="chain" id="PRO_0000059162" description="Polypeptide N-acetylgalactosaminyltransferase 8">
    <location>
        <begin position="1"/>
        <end position="590"/>
    </location>
</feature>
<feature type="topological domain" description="Cytoplasmic" evidence="2">
    <location>
        <begin position="1"/>
        <end position="11"/>
    </location>
</feature>
<feature type="transmembrane region" description="Helical; Signal-anchor for type II membrane protein" evidence="2">
    <location>
        <begin position="12"/>
        <end position="31"/>
    </location>
</feature>
<feature type="topological domain" description="Lumenal" evidence="2">
    <location>
        <begin position="32"/>
        <end position="590"/>
    </location>
</feature>
<feature type="domain" description="Ricin B-type lectin" evidence="3">
    <location>
        <begin position="446"/>
        <end position="573"/>
    </location>
</feature>
<feature type="region of interest" description="Catalytic subdomain A">
    <location>
        <begin position="127"/>
        <end position="236"/>
    </location>
</feature>
<feature type="region of interest" description="Catalytic subdomain B">
    <location>
        <begin position="291"/>
        <end position="353"/>
    </location>
</feature>
<feature type="binding site" evidence="1">
    <location>
        <position position="168"/>
    </location>
    <ligand>
        <name>substrate</name>
    </ligand>
</feature>
<feature type="binding site" evidence="1">
    <location>
        <position position="220"/>
    </location>
    <ligand>
        <name>Mn(2+)</name>
        <dbReference type="ChEBI" id="CHEBI:29035"/>
    </ligand>
</feature>
<feature type="binding site" evidence="1">
    <location>
        <position position="221"/>
    </location>
    <ligand>
        <name>substrate</name>
    </ligand>
</feature>
<feature type="binding site" evidence="1">
    <location>
        <position position="222"/>
    </location>
    <ligand>
        <name>Mn(2+)</name>
        <dbReference type="ChEBI" id="CHEBI:29035"/>
    </ligand>
</feature>
<feature type="binding site" evidence="1">
    <location>
        <position position="322"/>
    </location>
    <ligand>
        <name>substrate</name>
    </ligand>
</feature>
<feature type="binding site" evidence="1">
    <location>
        <position position="350"/>
    </location>
    <ligand>
        <name>Mn(2+)</name>
        <dbReference type="ChEBI" id="CHEBI:29035"/>
    </ligand>
</feature>
<feature type="binding site" evidence="1">
    <location>
        <position position="353"/>
    </location>
    <ligand>
        <name>substrate</name>
    </ligand>
</feature>
<feature type="glycosylation site" description="N-linked (GlcNAc...) asparagine" evidence="2">
    <location>
        <position position="77"/>
    </location>
</feature>
<feature type="glycosylation site" description="N-linked (GlcNAc...) asparagine" evidence="2">
    <location>
        <position position="241"/>
    </location>
</feature>
<feature type="disulfide bond" evidence="3">
    <location>
        <begin position="117"/>
        <end position="345"/>
    </location>
</feature>
<feature type="disulfide bond" evidence="3">
    <location>
        <begin position="336"/>
        <end position="419"/>
    </location>
</feature>
<feature type="disulfide bond" evidence="3">
    <location>
        <begin position="459"/>
        <end position="475"/>
    </location>
</feature>
<feature type="disulfide bond" evidence="3">
    <location>
        <begin position="502"/>
        <end position="517"/>
    </location>
</feature>
<feature type="disulfide bond" evidence="3">
    <location>
        <begin position="546"/>
        <end position="561"/>
    </location>
</feature>
<sequence>MCLDIWRHKKKVLPLLLLMAIGSIIYYLYTLKLEGERDESATSTTSRLERDIRDLQAVFESEVIPDLGALGRPARGNWTEEQLEAIAKSQRETGYNAWLSKRISPERSLYDMRHRSCKKLKYPMEKLPSVSVVITYHNEEASVLLRTLSSLRSRTPIQLLREVILVDDGSTQADEKLNDFIKIKFLNMVQHRRITTQVGLMHARVVGAELALADVLVFLDSHVEVTKGWLEPLIAPILEDNRTCTTPIIDTIDFDNFAYRRGKPSRGFFNWEFNYIQLPLLKEEAVAMPAPHKNPIMNGGLFAIGREWFSELGGYDKGLKIWGAEQFELSLKLWLCGGQILEVPCSRVGHLFRDGNFQIRYTNKDKNSEKKLISRNYRRVAEIWLDEYKDKLFANMPHLTVIPVGNLAEQRDLKNRLHCKPFKWFLDNLATDFLNLYPILDPAEYASGVLQSISSPKLCLDRKDPSHGQPKLAPCSSDHVFPSPEQYWSLTNHRELRSGFYCLEVRNHGVNVHIYQCHGQSGNQFWSFDSKTHQVISGQQQNFRHCLEAQPELNAVTSSVCDPKNHKQQWKFGYLNSQRLQHFWDNVKTQ</sequence>
<keyword id="KW-1015">Disulfide bond</keyword>
<keyword id="KW-0325">Glycoprotein</keyword>
<keyword id="KW-0328">Glycosyltransferase</keyword>
<keyword id="KW-0333">Golgi apparatus</keyword>
<keyword id="KW-0430">Lectin</keyword>
<keyword id="KW-0464">Manganese</keyword>
<keyword id="KW-0472">Membrane</keyword>
<keyword id="KW-0479">Metal-binding</keyword>
<keyword id="KW-1185">Reference proteome</keyword>
<keyword id="KW-0735">Signal-anchor</keyword>
<keyword id="KW-0808">Transferase</keyword>
<keyword id="KW-0812">Transmembrane</keyword>
<keyword id="KW-1133">Transmembrane helix</keyword>
<gene>
    <name evidence="8" type="primary">Pgant8</name>
    <name evidence="8" type="ORF">CG7297</name>
</gene>
<dbReference type="EC" id="2.4.1.41" evidence="4"/>
<dbReference type="EMBL" id="AE014296">
    <property type="protein sequence ID" value="AAF49587.1"/>
    <property type="molecule type" value="Genomic_DNA"/>
</dbReference>
<dbReference type="EMBL" id="AY070966">
    <property type="protein sequence ID" value="AAL48588.1"/>
    <property type="molecule type" value="mRNA"/>
</dbReference>
<dbReference type="RefSeq" id="NP_648800.1">
    <property type="nucleotide sequence ID" value="NM_140543.4"/>
</dbReference>
<dbReference type="SMR" id="Q9VUT6"/>
<dbReference type="FunCoup" id="Q9VUT6">
    <property type="interactions" value="37"/>
</dbReference>
<dbReference type="STRING" id="7227.FBpp0075331"/>
<dbReference type="CAZy" id="CBM13">
    <property type="family name" value="Carbohydrate-Binding Module Family 13"/>
</dbReference>
<dbReference type="CAZy" id="GT27">
    <property type="family name" value="Glycosyltransferase Family 27"/>
</dbReference>
<dbReference type="GlyCosmos" id="Q9VUT6">
    <property type="glycosylation" value="2 sites, No reported glycans"/>
</dbReference>
<dbReference type="GlyGen" id="Q9VUT6">
    <property type="glycosylation" value="2 sites"/>
</dbReference>
<dbReference type="PaxDb" id="7227-FBpp0075331"/>
<dbReference type="DNASU" id="39715"/>
<dbReference type="EnsemblMetazoa" id="FBtr0075578">
    <property type="protein sequence ID" value="FBpp0075331"/>
    <property type="gene ID" value="FBgn0036529"/>
</dbReference>
<dbReference type="GeneID" id="39715"/>
<dbReference type="KEGG" id="dme:Dmel_CG7297"/>
<dbReference type="AGR" id="FB:FBgn0036529"/>
<dbReference type="CTD" id="39715"/>
<dbReference type="FlyBase" id="FBgn0036529">
    <property type="gene designation" value="Pgant8"/>
</dbReference>
<dbReference type="VEuPathDB" id="VectorBase:FBgn0036529"/>
<dbReference type="eggNOG" id="KOG3736">
    <property type="taxonomic scope" value="Eukaryota"/>
</dbReference>
<dbReference type="GeneTree" id="ENSGT00940000166027"/>
<dbReference type="HOGENOM" id="CLU_013477_0_1_1"/>
<dbReference type="InParanoid" id="Q9VUT6"/>
<dbReference type="OMA" id="SRGFFDW"/>
<dbReference type="OrthoDB" id="6159198at2759"/>
<dbReference type="PhylomeDB" id="Q9VUT6"/>
<dbReference type="Reactome" id="R-DME-913709">
    <property type="pathway name" value="O-linked glycosylation of mucins"/>
</dbReference>
<dbReference type="UniPathway" id="UPA00378"/>
<dbReference type="BioGRID-ORCS" id="39715">
    <property type="hits" value="0 hits in 3 CRISPR screens"/>
</dbReference>
<dbReference type="GenomeRNAi" id="39715"/>
<dbReference type="PRO" id="PR:Q9VUT6"/>
<dbReference type="Proteomes" id="UP000000803">
    <property type="component" value="Chromosome 3L"/>
</dbReference>
<dbReference type="Bgee" id="FBgn0036529">
    <property type="expression patterns" value="Expressed in male accessory gland main cell (Drosophila) in male reproductive gland and 22 other cell types or tissues"/>
</dbReference>
<dbReference type="GO" id="GO:0005794">
    <property type="term" value="C:Golgi apparatus"/>
    <property type="evidence" value="ECO:0000318"/>
    <property type="project" value="GO_Central"/>
</dbReference>
<dbReference type="GO" id="GO:0000139">
    <property type="term" value="C:Golgi membrane"/>
    <property type="evidence" value="ECO:0007669"/>
    <property type="project" value="UniProtKB-SubCell"/>
</dbReference>
<dbReference type="GO" id="GO:0005795">
    <property type="term" value="C:Golgi stack"/>
    <property type="evidence" value="ECO:0000303"/>
    <property type="project" value="UniProtKB"/>
</dbReference>
<dbReference type="GO" id="GO:0030246">
    <property type="term" value="F:carbohydrate binding"/>
    <property type="evidence" value="ECO:0007669"/>
    <property type="project" value="UniProtKB-KW"/>
</dbReference>
<dbReference type="GO" id="GO:0046872">
    <property type="term" value="F:metal ion binding"/>
    <property type="evidence" value="ECO:0007669"/>
    <property type="project" value="UniProtKB-KW"/>
</dbReference>
<dbReference type="GO" id="GO:0004653">
    <property type="term" value="F:polypeptide N-acetylgalactosaminyltransferase activity"/>
    <property type="evidence" value="ECO:0000314"/>
    <property type="project" value="UniProtKB"/>
</dbReference>
<dbReference type="GO" id="GO:0006493">
    <property type="term" value="P:protein O-linked glycosylation"/>
    <property type="evidence" value="ECO:0000314"/>
    <property type="project" value="FlyBase"/>
</dbReference>
<dbReference type="CDD" id="cd23461">
    <property type="entry name" value="beta-trefoil_Ricin_Pgant8-like"/>
    <property type="match status" value="1"/>
</dbReference>
<dbReference type="CDD" id="cd02510">
    <property type="entry name" value="pp-GalNAc-T"/>
    <property type="match status" value="1"/>
</dbReference>
<dbReference type="FunFam" id="3.90.550.10:FF:000295">
    <property type="entry name" value="Polypeptide N-acetylgalactosaminyltransferase"/>
    <property type="match status" value="1"/>
</dbReference>
<dbReference type="Gene3D" id="2.80.10.50">
    <property type="match status" value="1"/>
</dbReference>
<dbReference type="Gene3D" id="3.90.550.10">
    <property type="entry name" value="Spore Coat Polysaccharide Biosynthesis Protein SpsA, Chain A"/>
    <property type="match status" value="1"/>
</dbReference>
<dbReference type="InterPro" id="IPR045885">
    <property type="entry name" value="GalNAc-T"/>
</dbReference>
<dbReference type="InterPro" id="IPR001173">
    <property type="entry name" value="Glyco_trans_2-like"/>
</dbReference>
<dbReference type="InterPro" id="IPR029044">
    <property type="entry name" value="Nucleotide-diphossugar_trans"/>
</dbReference>
<dbReference type="InterPro" id="IPR035992">
    <property type="entry name" value="Ricin_B-like_lectins"/>
</dbReference>
<dbReference type="InterPro" id="IPR000772">
    <property type="entry name" value="Ricin_B_lectin"/>
</dbReference>
<dbReference type="PANTHER" id="PTHR11675">
    <property type="entry name" value="N-ACETYLGALACTOSAMINYLTRANSFERASE"/>
    <property type="match status" value="1"/>
</dbReference>
<dbReference type="PANTHER" id="PTHR11675:SF134">
    <property type="entry name" value="N-ACETYLGALACTOSAMINYLTRANSFERASE 4-RELATED"/>
    <property type="match status" value="1"/>
</dbReference>
<dbReference type="Pfam" id="PF00535">
    <property type="entry name" value="Glycos_transf_2"/>
    <property type="match status" value="1"/>
</dbReference>
<dbReference type="Pfam" id="PF00652">
    <property type="entry name" value="Ricin_B_lectin"/>
    <property type="match status" value="1"/>
</dbReference>
<dbReference type="SMART" id="SM00458">
    <property type="entry name" value="RICIN"/>
    <property type="match status" value="1"/>
</dbReference>
<dbReference type="SUPFAM" id="SSF53448">
    <property type="entry name" value="Nucleotide-diphospho-sugar transferases"/>
    <property type="match status" value="1"/>
</dbReference>
<dbReference type="SUPFAM" id="SSF50370">
    <property type="entry name" value="Ricin B-like lectins"/>
    <property type="match status" value="1"/>
</dbReference>
<dbReference type="PROSITE" id="PS50231">
    <property type="entry name" value="RICIN_B_LECTIN"/>
    <property type="match status" value="1"/>
</dbReference>
<protein>
    <recommendedName>
        <fullName>Polypeptide N-acetylgalactosaminyltransferase 8</fullName>
        <shortName>pp-GaNTase 8</shortName>
        <ecNumber evidence="4">2.4.1.41</ecNumber>
    </recommendedName>
    <alternativeName>
        <fullName>Protein-UDP acetylgalactosaminyltransferase 8</fullName>
    </alternativeName>
    <alternativeName>
        <fullName>UDP-GalNAc:polypeptide N-acetylgalactosaminyltransferase 8</fullName>
    </alternativeName>
</protein>
<name>GALT8_DROME</name>
<evidence type="ECO:0000250" key="1"/>
<evidence type="ECO:0000255" key="2"/>
<evidence type="ECO:0000255" key="3">
    <source>
        <dbReference type="PROSITE-ProRule" id="PRU00174"/>
    </source>
</evidence>
<evidence type="ECO:0000269" key="4">
    <source>
    </source>
</evidence>
<evidence type="ECO:0000269" key="5">
    <source>
    </source>
</evidence>
<evidence type="ECO:0000305" key="6"/>
<evidence type="ECO:0000305" key="7">
    <source>
    </source>
</evidence>
<evidence type="ECO:0000312" key="8">
    <source>
        <dbReference type="FlyBase" id="FBgn0036529"/>
    </source>
</evidence>